<evidence type="ECO:0000250" key="1">
    <source>
        <dbReference type="UniProtKB" id="Q9NP77"/>
    </source>
</evidence>
<evidence type="ECO:0000305" key="2"/>
<evidence type="ECO:0000312" key="3">
    <source>
        <dbReference type="HGNC" id="HGNC:43622"/>
    </source>
</evidence>
<accession>A0A1W2PQJ5</accession>
<comment type="function">
    <text evidence="1">Protein phosphatase that catalyzes the dephosphorylation of the C-terminal domain of RNA polymerase II. Plays a role in RNA processing and termination.</text>
</comment>
<comment type="catalytic activity">
    <reaction evidence="1">
        <text>O-phospho-L-seryl-[protein] + H2O = L-seryl-[protein] + phosphate</text>
        <dbReference type="Rhea" id="RHEA:20629"/>
        <dbReference type="Rhea" id="RHEA-COMP:9863"/>
        <dbReference type="Rhea" id="RHEA-COMP:11604"/>
        <dbReference type="ChEBI" id="CHEBI:15377"/>
        <dbReference type="ChEBI" id="CHEBI:29999"/>
        <dbReference type="ChEBI" id="CHEBI:43474"/>
        <dbReference type="ChEBI" id="CHEBI:83421"/>
        <dbReference type="EC" id="3.1.3.16"/>
    </reaction>
</comment>
<comment type="catalytic activity">
    <reaction evidence="1">
        <text>O-phospho-L-threonyl-[protein] + H2O = L-threonyl-[protein] + phosphate</text>
        <dbReference type="Rhea" id="RHEA:47004"/>
        <dbReference type="Rhea" id="RHEA-COMP:11060"/>
        <dbReference type="Rhea" id="RHEA-COMP:11605"/>
        <dbReference type="ChEBI" id="CHEBI:15377"/>
        <dbReference type="ChEBI" id="CHEBI:30013"/>
        <dbReference type="ChEBI" id="CHEBI:43474"/>
        <dbReference type="ChEBI" id="CHEBI:61977"/>
        <dbReference type="EC" id="3.1.3.16"/>
    </reaction>
</comment>
<comment type="subcellular location">
    <subcellularLocation>
        <location evidence="1">Nucleus</location>
    </subcellularLocation>
</comment>
<comment type="similarity">
    <text evidence="2">Belongs to the SSU72 phosphatase family.</text>
</comment>
<dbReference type="EC" id="3.1.3.16" evidence="1"/>
<dbReference type="EMBL" id="AC018793">
    <property type="status" value="NOT_ANNOTATED_CDS"/>
    <property type="molecule type" value="Genomic_DNA"/>
</dbReference>
<dbReference type="RefSeq" id="NP_001400929.1">
    <property type="nucleotide sequence ID" value="NM_001414000.1"/>
</dbReference>
<dbReference type="SMR" id="A0A1W2PQJ5"/>
<dbReference type="FunCoup" id="A0A1W2PQJ5">
    <property type="interactions" value="258"/>
</dbReference>
<dbReference type="STRING" id="9606.ENSP00000491768"/>
<dbReference type="BioMuta" id="ENSG00000284546"/>
<dbReference type="MassIVE" id="A0A1W2PQJ5"/>
<dbReference type="PeptideAtlas" id="A0A1W2PQJ5"/>
<dbReference type="Ensembl" id="ENST00000640302.2">
    <property type="protein sequence ID" value="ENSP00000491768.1"/>
    <property type="gene ID" value="ENSG00000284546.2"/>
</dbReference>
<dbReference type="GeneID" id="143506"/>
<dbReference type="MANE-Select" id="ENST00000640302.2">
    <property type="protein sequence ID" value="ENSP00000491768.1"/>
    <property type="RefSeq nucleotide sequence ID" value="NM_001414000.1"/>
    <property type="RefSeq protein sequence ID" value="NP_001400929.1"/>
</dbReference>
<dbReference type="AGR" id="HGNC:43622"/>
<dbReference type="GeneCards" id="SSU72L3"/>
<dbReference type="HGNC" id="HGNC:43622">
    <property type="gene designation" value="SSU72L3"/>
</dbReference>
<dbReference type="VEuPathDB" id="HostDB:ENSG00000284546"/>
<dbReference type="GeneTree" id="ENSGT00390000010165"/>
<dbReference type="InParanoid" id="A0A1W2PQJ5"/>
<dbReference type="OMA" id="FGAGFWV"/>
<dbReference type="OrthoDB" id="9552019at2759"/>
<dbReference type="PAN-GO" id="A0A1W2PQJ5">
    <property type="GO annotations" value="5 GO annotations based on evolutionary models"/>
</dbReference>
<dbReference type="PRO" id="PR:A0A1W2PQJ5"/>
<dbReference type="Proteomes" id="UP000005640">
    <property type="component" value="Chromosome 11"/>
</dbReference>
<dbReference type="RNAct" id="A0A1W2PQJ5">
    <property type="molecule type" value="protein"/>
</dbReference>
<dbReference type="Bgee" id="ENSG00000284546">
    <property type="expression patterns" value="Expressed in cell and 6 other cell types or tissues"/>
</dbReference>
<dbReference type="GO" id="GO:0005847">
    <property type="term" value="C:mRNA cleavage and polyadenylation specificity factor complex"/>
    <property type="evidence" value="ECO:0000318"/>
    <property type="project" value="GO_Central"/>
</dbReference>
<dbReference type="GO" id="GO:0008420">
    <property type="term" value="F:RNA polymerase II CTD heptapeptide repeat phosphatase activity"/>
    <property type="evidence" value="ECO:0000318"/>
    <property type="project" value="GO_Central"/>
</dbReference>
<dbReference type="GO" id="GO:0006397">
    <property type="term" value="P:mRNA processing"/>
    <property type="evidence" value="ECO:0007669"/>
    <property type="project" value="UniProtKB-KW"/>
</dbReference>
<dbReference type="GO" id="GO:0006369">
    <property type="term" value="P:termination of RNA polymerase II transcription"/>
    <property type="evidence" value="ECO:0000318"/>
    <property type="project" value="GO_Central"/>
</dbReference>
<dbReference type="FunFam" id="3.40.50.2300:FF:000039">
    <property type="entry name" value="RNA polymerase II subunit A C-terminal domain phosphatase"/>
    <property type="match status" value="1"/>
</dbReference>
<dbReference type="FunFam" id="3.40.50.2300:FF:000066">
    <property type="entry name" value="RNA polymerase II subunit A C-terminal domain phosphatase SSU72"/>
    <property type="match status" value="1"/>
</dbReference>
<dbReference type="Gene3D" id="3.40.50.2300">
    <property type="match status" value="2"/>
</dbReference>
<dbReference type="InterPro" id="IPR036196">
    <property type="entry name" value="Ptyr_pPase_sf"/>
</dbReference>
<dbReference type="InterPro" id="IPR006811">
    <property type="entry name" value="RNA_pol_II_suA"/>
</dbReference>
<dbReference type="PANTHER" id="PTHR20383">
    <property type="entry name" value="RNA POLYMERASE II SUBUNIT A C-TERMINAL DOMAIN PHOSPHATASE"/>
    <property type="match status" value="1"/>
</dbReference>
<dbReference type="Pfam" id="PF04722">
    <property type="entry name" value="Ssu72"/>
    <property type="match status" value="1"/>
</dbReference>
<dbReference type="SUPFAM" id="SSF52788">
    <property type="entry name" value="Phosphotyrosine protein phosphatases I"/>
    <property type="match status" value="1"/>
</dbReference>
<gene>
    <name evidence="3" type="primary">SSU72L3</name>
</gene>
<keyword id="KW-0378">Hydrolase</keyword>
<keyword id="KW-0507">mRNA processing</keyword>
<keyword id="KW-0539">Nucleus</keyword>
<keyword id="KW-0904">Protein phosphatase</keyword>
<keyword id="KW-1185">Reference proteome</keyword>
<protein>
    <recommendedName>
        <fullName evidence="2">RNA polymerase II subunit A C-terminal domain phosphatase SSU72 like protein 3</fullName>
    </recommendedName>
    <alternativeName>
        <fullName evidence="2">RNA polymerase II subunit A C-terminal domain phosphatase SSU72L3</fullName>
        <shortName>CTD phosphatase SSU72L3</shortName>
        <ecNumber evidence="1">3.1.3.16</ecNumber>
    </alternativeName>
</protein>
<name>S72L3_HUMAN</name>
<feature type="chain" id="PRO_0000457672" description="RNA polymerase II subunit A C-terminal domain phosphatase SSU72 like protein 3">
    <location>
        <begin position="1"/>
        <end position="194"/>
    </location>
</feature>
<sequence>MLSSPLRVAVVCVSNVNRSMEAHSILRRKGLSVRSFGTESHVRLPGPRPNRPVVYDFATTYKQMYNDLLRKDRERYTRNGILHILGRNERIKPGPERFQECTDSFDVIFTCEESVYDTVVEDLCSREQQTFQPVHVINMDIQDTLEDATLGAFLICEICQCLQQSDDIEDNLEELLLQMEEKAGKSFLHTVCFY</sequence>
<reference key="1">
    <citation type="journal article" date="2006" name="Nature">
        <title>Human chromosome 11 DNA sequence and analysis including novel gene identification.</title>
        <authorList>
            <person name="Taylor T.D."/>
            <person name="Noguchi H."/>
            <person name="Totoki Y."/>
            <person name="Toyoda A."/>
            <person name="Kuroki Y."/>
            <person name="Dewar K."/>
            <person name="Lloyd C."/>
            <person name="Itoh T."/>
            <person name="Takeda T."/>
            <person name="Kim D.-W."/>
            <person name="She X."/>
            <person name="Barlow K.F."/>
            <person name="Bloom T."/>
            <person name="Bruford E."/>
            <person name="Chang J.L."/>
            <person name="Cuomo C.A."/>
            <person name="Eichler E."/>
            <person name="FitzGerald M.G."/>
            <person name="Jaffe D.B."/>
            <person name="LaButti K."/>
            <person name="Nicol R."/>
            <person name="Park H.-S."/>
            <person name="Seaman C."/>
            <person name="Sougnez C."/>
            <person name="Yang X."/>
            <person name="Zimmer A.R."/>
            <person name="Zody M.C."/>
            <person name="Birren B.W."/>
            <person name="Nusbaum C."/>
            <person name="Fujiyama A."/>
            <person name="Hattori M."/>
            <person name="Rogers J."/>
            <person name="Lander E.S."/>
            <person name="Sakaki Y."/>
        </authorList>
    </citation>
    <scope>NUCLEOTIDE SEQUENCE [LARGE SCALE GENOMIC DNA]</scope>
</reference>
<proteinExistence type="inferred from homology"/>
<organism>
    <name type="scientific">Homo sapiens</name>
    <name type="common">Human</name>
    <dbReference type="NCBI Taxonomy" id="9606"/>
    <lineage>
        <taxon>Eukaryota</taxon>
        <taxon>Metazoa</taxon>
        <taxon>Chordata</taxon>
        <taxon>Craniata</taxon>
        <taxon>Vertebrata</taxon>
        <taxon>Euteleostomi</taxon>
        <taxon>Mammalia</taxon>
        <taxon>Eutheria</taxon>
        <taxon>Euarchontoglires</taxon>
        <taxon>Primates</taxon>
        <taxon>Haplorrhini</taxon>
        <taxon>Catarrhini</taxon>
        <taxon>Hominidae</taxon>
        <taxon>Homo</taxon>
    </lineage>
</organism>